<protein>
    <recommendedName>
        <fullName evidence="1">Bifunctional protein GlmU</fullName>
    </recommendedName>
    <domain>
        <recommendedName>
            <fullName evidence="1">UDP-N-acetylglucosamine pyrophosphorylase</fullName>
            <ecNumber evidence="1">2.7.7.23</ecNumber>
        </recommendedName>
        <alternativeName>
            <fullName evidence="1">N-acetylglucosamine-1-phosphate uridyltransferase</fullName>
        </alternativeName>
    </domain>
    <domain>
        <recommendedName>
            <fullName evidence="1">Glucosamine-1-phosphate N-acetyltransferase</fullName>
            <ecNumber evidence="1">2.3.1.157</ecNumber>
        </recommendedName>
    </domain>
</protein>
<organism>
    <name type="scientific">Rippkaea orientalis (strain PCC 8801 / RF-1)</name>
    <name type="common">Cyanothece sp. (strain PCC 8801)</name>
    <dbReference type="NCBI Taxonomy" id="41431"/>
    <lineage>
        <taxon>Bacteria</taxon>
        <taxon>Bacillati</taxon>
        <taxon>Cyanobacteriota</taxon>
        <taxon>Cyanophyceae</taxon>
        <taxon>Oscillatoriophycideae</taxon>
        <taxon>Chroococcales</taxon>
        <taxon>Aphanothecaceae</taxon>
        <taxon>Rippkaea</taxon>
        <taxon>Rippkaea orientalis</taxon>
    </lineage>
</organism>
<feature type="chain" id="PRO_1000186436" description="Bifunctional protein GlmU">
    <location>
        <begin position="1"/>
        <end position="453"/>
    </location>
</feature>
<feature type="region of interest" description="Pyrophosphorylase" evidence="1">
    <location>
        <begin position="1"/>
        <end position="226"/>
    </location>
</feature>
<feature type="region of interest" description="Linker" evidence="1">
    <location>
        <begin position="227"/>
        <end position="247"/>
    </location>
</feature>
<feature type="region of interest" description="N-acetyltransferase" evidence="1">
    <location>
        <begin position="248"/>
        <end position="453"/>
    </location>
</feature>
<feature type="active site" description="Proton acceptor" evidence="1">
    <location>
        <position position="359"/>
    </location>
</feature>
<feature type="binding site" evidence="1">
    <location>
        <begin position="7"/>
        <end position="10"/>
    </location>
    <ligand>
        <name>UDP-N-acetyl-alpha-D-glucosamine</name>
        <dbReference type="ChEBI" id="CHEBI:57705"/>
    </ligand>
</feature>
<feature type="binding site" evidence="1">
    <location>
        <position position="21"/>
    </location>
    <ligand>
        <name>UDP-N-acetyl-alpha-D-glucosamine</name>
        <dbReference type="ChEBI" id="CHEBI:57705"/>
    </ligand>
</feature>
<feature type="binding site" evidence="1">
    <location>
        <position position="73"/>
    </location>
    <ligand>
        <name>UDP-N-acetyl-alpha-D-glucosamine</name>
        <dbReference type="ChEBI" id="CHEBI:57705"/>
    </ligand>
</feature>
<feature type="binding site" evidence="1">
    <location>
        <begin position="78"/>
        <end position="79"/>
    </location>
    <ligand>
        <name>UDP-N-acetyl-alpha-D-glucosamine</name>
        <dbReference type="ChEBI" id="CHEBI:57705"/>
    </ligand>
</feature>
<feature type="binding site" evidence="1">
    <location>
        <position position="103"/>
    </location>
    <ligand>
        <name>Mg(2+)</name>
        <dbReference type="ChEBI" id="CHEBI:18420"/>
    </ligand>
</feature>
<feature type="binding site" evidence="1">
    <location>
        <position position="140"/>
    </location>
    <ligand>
        <name>UDP-N-acetyl-alpha-D-glucosamine</name>
        <dbReference type="ChEBI" id="CHEBI:57705"/>
    </ligand>
</feature>
<feature type="binding site" evidence="1">
    <location>
        <position position="155"/>
    </location>
    <ligand>
        <name>UDP-N-acetyl-alpha-D-glucosamine</name>
        <dbReference type="ChEBI" id="CHEBI:57705"/>
    </ligand>
</feature>
<feature type="binding site" evidence="1">
    <location>
        <position position="170"/>
    </location>
    <ligand>
        <name>UDP-N-acetyl-alpha-D-glucosamine</name>
        <dbReference type="ChEBI" id="CHEBI:57705"/>
    </ligand>
</feature>
<feature type="binding site" evidence="1">
    <location>
        <position position="224"/>
    </location>
    <ligand>
        <name>Mg(2+)</name>
        <dbReference type="ChEBI" id="CHEBI:18420"/>
    </ligand>
</feature>
<feature type="binding site" evidence="1">
    <location>
        <position position="224"/>
    </location>
    <ligand>
        <name>UDP-N-acetyl-alpha-D-glucosamine</name>
        <dbReference type="ChEBI" id="CHEBI:57705"/>
    </ligand>
</feature>
<feature type="binding site" evidence="1">
    <location>
        <position position="329"/>
    </location>
    <ligand>
        <name>UDP-N-acetyl-alpha-D-glucosamine</name>
        <dbReference type="ChEBI" id="CHEBI:57705"/>
    </ligand>
</feature>
<feature type="binding site" evidence="1">
    <location>
        <position position="347"/>
    </location>
    <ligand>
        <name>UDP-N-acetyl-alpha-D-glucosamine</name>
        <dbReference type="ChEBI" id="CHEBI:57705"/>
    </ligand>
</feature>
<feature type="binding site" evidence="1">
    <location>
        <position position="362"/>
    </location>
    <ligand>
        <name>UDP-N-acetyl-alpha-D-glucosamine</name>
        <dbReference type="ChEBI" id="CHEBI:57705"/>
    </ligand>
</feature>
<feature type="binding site" evidence="1">
    <location>
        <position position="373"/>
    </location>
    <ligand>
        <name>UDP-N-acetyl-alpha-D-glucosamine</name>
        <dbReference type="ChEBI" id="CHEBI:57705"/>
    </ligand>
</feature>
<feature type="binding site" evidence="1">
    <location>
        <position position="376"/>
    </location>
    <ligand>
        <name>acetyl-CoA</name>
        <dbReference type="ChEBI" id="CHEBI:57288"/>
    </ligand>
</feature>
<feature type="binding site" evidence="1">
    <location>
        <begin position="382"/>
        <end position="383"/>
    </location>
    <ligand>
        <name>acetyl-CoA</name>
        <dbReference type="ChEBI" id="CHEBI:57288"/>
    </ligand>
</feature>
<feature type="binding site" evidence="1">
    <location>
        <position position="419"/>
    </location>
    <ligand>
        <name>acetyl-CoA</name>
        <dbReference type="ChEBI" id="CHEBI:57288"/>
    </ligand>
</feature>
<feature type="binding site" evidence="1">
    <location>
        <position position="436"/>
    </location>
    <ligand>
        <name>acetyl-CoA</name>
        <dbReference type="ChEBI" id="CHEBI:57288"/>
    </ligand>
</feature>
<proteinExistence type="inferred from homology"/>
<reference key="1">
    <citation type="journal article" date="2011" name="MBio">
        <title>Novel metabolic attributes of the genus Cyanothece, comprising a group of unicellular nitrogen-fixing Cyanobacteria.</title>
        <authorList>
            <person name="Bandyopadhyay A."/>
            <person name="Elvitigala T."/>
            <person name="Welsh E."/>
            <person name="Stockel J."/>
            <person name="Liberton M."/>
            <person name="Min H."/>
            <person name="Sherman L.A."/>
            <person name="Pakrasi H.B."/>
        </authorList>
    </citation>
    <scope>NUCLEOTIDE SEQUENCE [LARGE SCALE GENOMIC DNA]</scope>
    <source>
        <strain>PCC 8801 / RF-1</strain>
    </source>
</reference>
<name>GLMU_RIPO1</name>
<evidence type="ECO:0000255" key="1">
    <source>
        <dbReference type="HAMAP-Rule" id="MF_01631"/>
    </source>
</evidence>
<keyword id="KW-0012">Acyltransferase</keyword>
<keyword id="KW-0133">Cell shape</keyword>
<keyword id="KW-0961">Cell wall biogenesis/degradation</keyword>
<keyword id="KW-0963">Cytoplasm</keyword>
<keyword id="KW-0460">Magnesium</keyword>
<keyword id="KW-0479">Metal-binding</keyword>
<keyword id="KW-0511">Multifunctional enzyme</keyword>
<keyword id="KW-0548">Nucleotidyltransferase</keyword>
<keyword id="KW-0573">Peptidoglycan synthesis</keyword>
<keyword id="KW-1185">Reference proteome</keyword>
<keyword id="KW-0677">Repeat</keyword>
<keyword id="KW-0808">Transferase</keyword>
<gene>
    <name evidence="1" type="primary">glmU</name>
    <name type="ordered locus">PCC8801_4359</name>
</gene>
<accession>B7JVE8</accession>
<sequence>MVAVAILAAGRGTRMKSNLPKVLHRLGGYSLVERVLNSCQLLNPSRQLVIIGYEGEQVRDSLQQLDSLEFVEQKEQLGTGHAIQQLLPHLEGFQGDLLVLNGDVPLLRPQTLENLLNIHKTHRNAATLLTAHLPNPKGYGRVFCDNNNLVTQIVEDRDCNAAQKQNHRINGGIYCFNWQQLAAVLPKLSADNDQKEYYLTDVVKFLAPVMAVDVEDYLEITGINDRKQLAMANGILQNRVKDHWMAQGVTLIDPDSITIDDTVELQTDVIIEPQTHLRGKTSIGKGSRLGPGSLIENSHIGDNVTVLYSVITESQVASGCRVGPYSHLRGQAQIGESCRIGNFVEIKKSVIEQKSNVAHLSYLGDATLGEQVNVGAGTITANYDGVQKHRTIIGKGTKTGANSVFVAPVTLGEEVTVAAGSVVTHDVPDRALVIARQRQRIIEEWKKTIESKK</sequence>
<dbReference type="EC" id="2.7.7.23" evidence="1"/>
<dbReference type="EC" id="2.3.1.157" evidence="1"/>
<dbReference type="EMBL" id="CP001287">
    <property type="protein sequence ID" value="ACK68281.1"/>
    <property type="molecule type" value="Genomic_DNA"/>
</dbReference>
<dbReference type="RefSeq" id="WP_015957401.1">
    <property type="nucleotide sequence ID" value="NC_011726.1"/>
</dbReference>
<dbReference type="SMR" id="B7JVE8"/>
<dbReference type="STRING" id="41431.PCC8801_4359"/>
<dbReference type="KEGG" id="cyp:PCC8801_4359"/>
<dbReference type="eggNOG" id="COG1207">
    <property type="taxonomic scope" value="Bacteria"/>
</dbReference>
<dbReference type="HOGENOM" id="CLU_029499_15_2_3"/>
<dbReference type="OrthoDB" id="9775031at2"/>
<dbReference type="UniPathway" id="UPA00113">
    <property type="reaction ID" value="UER00532"/>
</dbReference>
<dbReference type="UniPathway" id="UPA00113">
    <property type="reaction ID" value="UER00533"/>
</dbReference>
<dbReference type="UniPathway" id="UPA00973"/>
<dbReference type="Proteomes" id="UP000008204">
    <property type="component" value="Chromosome"/>
</dbReference>
<dbReference type="GO" id="GO:0031470">
    <property type="term" value="C:carboxysome"/>
    <property type="evidence" value="ECO:0007669"/>
    <property type="project" value="UniProtKB-ARBA"/>
</dbReference>
<dbReference type="GO" id="GO:0005737">
    <property type="term" value="C:cytoplasm"/>
    <property type="evidence" value="ECO:0007669"/>
    <property type="project" value="UniProtKB-SubCell"/>
</dbReference>
<dbReference type="GO" id="GO:0016020">
    <property type="term" value="C:membrane"/>
    <property type="evidence" value="ECO:0007669"/>
    <property type="project" value="GOC"/>
</dbReference>
<dbReference type="GO" id="GO:0019134">
    <property type="term" value="F:glucosamine-1-phosphate N-acetyltransferase activity"/>
    <property type="evidence" value="ECO:0007669"/>
    <property type="project" value="UniProtKB-UniRule"/>
</dbReference>
<dbReference type="GO" id="GO:0000287">
    <property type="term" value="F:magnesium ion binding"/>
    <property type="evidence" value="ECO:0007669"/>
    <property type="project" value="UniProtKB-UniRule"/>
</dbReference>
<dbReference type="GO" id="GO:0043886">
    <property type="term" value="F:structural constituent of carboxysome shell"/>
    <property type="evidence" value="ECO:0007669"/>
    <property type="project" value="UniProtKB-ARBA"/>
</dbReference>
<dbReference type="GO" id="GO:0003977">
    <property type="term" value="F:UDP-N-acetylglucosamine diphosphorylase activity"/>
    <property type="evidence" value="ECO:0007669"/>
    <property type="project" value="UniProtKB-UniRule"/>
</dbReference>
<dbReference type="GO" id="GO:0000902">
    <property type="term" value="P:cell morphogenesis"/>
    <property type="evidence" value="ECO:0007669"/>
    <property type="project" value="UniProtKB-UniRule"/>
</dbReference>
<dbReference type="GO" id="GO:0071555">
    <property type="term" value="P:cell wall organization"/>
    <property type="evidence" value="ECO:0007669"/>
    <property type="project" value="UniProtKB-KW"/>
</dbReference>
<dbReference type="GO" id="GO:0009245">
    <property type="term" value="P:lipid A biosynthetic process"/>
    <property type="evidence" value="ECO:0007669"/>
    <property type="project" value="UniProtKB-UniRule"/>
</dbReference>
<dbReference type="GO" id="GO:0009252">
    <property type="term" value="P:peptidoglycan biosynthetic process"/>
    <property type="evidence" value="ECO:0007669"/>
    <property type="project" value="UniProtKB-UniRule"/>
</dbReference>
<dbReference type="GO" id="GO:0008360">
    <property type="term" value="P:regulation of cell shape"/>
    <property type="evidence" value="ECO:0007669"/>
    <property type="project" value="UniProtKB-KW"/>
</dbReference>
<dbReference type="GO" id="GO:0006048">
    <property type="term" value="P:UDP-N-acetylglucosamine biosynthetic process"/>
    <property type="evidence" value="ECO:0007669"/>
    <property type="project" value="UniProtKB-UniPathway"/>
</dbReference>
<dbReference type="CDD" id="cd02540">
    <property type="entry name" value="GT2_GlmU_N_bac"/>
    <property type="match status" value="1"/>
</dbReference>
<dbReference type="CDD" id="cd03353">
    <property type="entry name" value="LbH_GlmU_C"/>
    <property type="match status" value="1"/>
</dbReference>
<dbReference type="Gene3D" id="2.160.10.10">
    <property type="entry name" value="Hexapeptide repeat proteins"/>
    <property type="match status" value="1"/>
</dbReference>
<dbReference type="Gene3D" id="3.90.550.10">
    <property type="entry name" value="Spore Coat Polysaccharide Biosynthesis Protein SpsA, Chain A"/>
    <property type="match status" value="1"/>
</dbReference>
<dbReference type="HAMAP" id="MF_01631">
    <property type="entry name" value="GlmU"/>
    <property type="match status" value="1"/>
</dbReference>
<dbReference type="InterPro" id="IPR005882">
    <property type="entry name" value="Bifunctional_GlmU"/>
</dbReference>
<dbReference type="InterPro" id="IPR050065">
    <property type="entry name" value="GlmU-like"/>
</dbReference>
<dbReference type="InterPro" id="IPR038009">
    <property type="entry name" value="GlmU_C_LbH"/>
</dbReference>
<dbReference type="InterPro" id="IPR001451">
    <property type="entry name" value="Hexapep"/>
</dbReference>
<dbReference type="InterPro" id="IPR025877">
    <property type="entry name" value="MobA-like_NTP_Trfase"/>
</dbReference>
<dbReference type="InterPro" id="IPR029044">
    <property type="entry name" value="Nucleotide-diphossugar_trans"/>
</dbReference>
<dbReference type="InterPro" id="IPR011004">
    <property type="entry name" value="Trimer_LpxA-like_sf"/>
</dbReference>
<dbReference type="NCBIfam" id="TIGR01173">
    <property type="entry name" value="glmU"/>
    <property type="match status" value="1"/>
</dbReference>
<dbReference type="NCBIfam" id="NF010940">
    <property type="entry name" value="PRK14360.1"/>
    <property type="match status" value="1"/>
</dbReference>
<dbReference type="PANTHER" id="PTHR43584:SF3">
    <property type="entry name" value="BIFUNCTIONAL PROTEIN GLMU"/>
    <property type="match status" value="1"/>
</dbReference>
<dbReference type="PANTHER" id="PTHR43584">
    <property type="entry name" value="NUCLEOTIDYL TRANSFERASE"/>
    <property type="match status" value="1"/>
</dbReference>
<dbReference type="Pfam" id="PF00132">
    <property type="entry name" value="Hexapep"/>
    <property type="match status" value="2"/>
</dbReference>
<dbReference type="Pfam" id="PF12804">
    <property type="entry name" value="NTP_transf_3"/>
    <property type="match status" value="1"/>
</dbReference>
<dbReference type="SUPFAM" id="SSF53448">
    <property type="entry name" value="Nucleotide-diphospho-sugar transferases"/>
    <property type="match status" value="1"/>
</dbReference>
<dbReference type="SUPFAM" id="SSF51161">
    <property type="entry name" value="Trimeric LpxA-like enzymes"/>
    <property type="match status" value="1"/>
</dbReference>
<comment type="function">
    <text evidence="1">Catalyzes the last two sequential reactions in the de novo biosynthetic pathway for UDP-N-acetylglucosamine (UDP-GlcNAc). The C-terminal domain catalyzes the transfer of acetyl group from acetyl coenzyme A to glucosamine-1-phosphate (GlcN-1-P) to produce N-acetylglucosamine-1-phosphate (GlcNAc-1-P), which is converted into UDP-GlcNAc by the transfer of uridine 5-monophosphate (from uridine 5-triphosphate), a reaction catalyzed by the N-terminal domain.</text>
</comment>
<comment type="catalytic activity">
    <reaction evidence="1">
        <text>alpha-D-glucosamine 1-phosphate + acetyl-CoA = N-acetyl-alpha-D-glucosamine 1-phosphate + CoA + H(+)</text>
        <dbReference type="Rhea" id="RHEA:13725"/>
        <dbReference type="ChEBI" id="CHEBI:15378"/>
        <dbReference type="ChEBI" id="CHEBI:57287"/>
        <dbReference type="ChEBI" id="CHEBI:57288"/>
        <dbReference type="ChEBI" id="CHEBI:57776"/>
        <dbReference type="ChEBI" id="CHEBI:58516"/>
        <dbReference type="EC" id="2.3.1.157"/>
    </reaction>
</comment>
<comment type="catalytic activity">
    <reaction evidence="1">
        <text>N-acetyl-alpha-D-glucosamine 1-phosphate + UTP + H(+) = UDP-N-acetyl-alpha-D-glucosamine + diphosphate</text>
        <dbReference type="Rhea" id="RHEA:13509"/>
        <dbReference type="ChEBI" id="CHEBI:15378"/>
        <dbReference type="ChEBI" id="CHEBI:33019"/>
        <dbReference type="ChEBI" id="CHEBI:46398"/>
        <dbReference type="ChEBI" id="CHEBI:57705"/>
        <dbReference type="ChEBI" id="CHEBI:57776"/>
        <dbReference type="EC" id="2.7.7.23"/>
    </reaction>
</comment>
<comment type="cofactor">
    <cofactor evidence="1">
        <name>Mg(2+)</name>
        <dbReference type="ChEBI" id="CHEBI:18420"/>
    </cofactor>
    <text evidence="1">Binds 1 Mg(2+) ion per subunit.</text>
</comment>
<comment type="pathway">
    <text evidence="1">Nucleotide-sugar biosynthesis; UDP-N-acetyl-alpha-D-glucosamine biosynthesis; N-acetyl-alpha-D-glucosamine 1-phosphate from alpha-D-glucosamine 6-phosphate (route II): step 2/2.</text>
</comment>
<comment type="pathway">
    <text evidence="1">Nucleotide-sugar biosynthesis; UDP-N-acetyl-alpha-D-glucosamine biosynthesis; UDP-N-acetyl-alpha-D-glucosamine from N-acetyl-alpha-D-glucosamine 1-phosphate: step 1/1.</text>
</comment>
<comment type="pathway">
    <text evidence="1">Bacterial outer membrane biogenesis; LPS lipid A biosynthesis.</text>
</comment>
<comment type="subunit">
    <text evidence="1">Homotrimer.</text>
</comment>
<comment type="subcellular location">
    <subcellularLocation>
        <location evidence="1">Cytoplasm</location>
    </subcellularLocation>
</comment>
<comment type="similarity">
    <text evidence="1">In the N-terminal section; belongs to the N-acetylglucosamine-1-phosphate uridyltransferase family.</text>
</comment>
<comment type="similarity">
    <text evidence="1">In the C-terminal section; belongs to the transferase hexapeptide repeat family.</text>
</comment>